<accession>O43402</accession>
<accession>C9JB21</accession>
<keyword id="KW-0002">3D-structure</keyword>
<keyword id="KW-0025">Alternative splicing</keyword>
<keyword id="KW-0256">Endoplasmic reticulum</keyword>
<keyword id="KW-0472">Membrane</keyword>
<keyword id="KW-1267">Proteomics identification</keyword>
<keyword id="KW-1185">Reference proteome</keyword>
<reference key="1">
    <citation type="journal article" date="1999" name="Mamm. Genome">
        <title>The 5-prime region of the COX4 gene contains a novel overlapping gene, NOC4.</title>
        <authorList>
            <person name="Bachman N.J."/>
            <person name="Wu W."/>
            <person name="Schmidt T.R."/>
            <person name="Grossman L.I."/>
            <person name="Lomax M.I."/>
        </authorList>
    </citation>
    <scope>NUCLEOTIDE SEQUENCE [GENOMIC DNA / MRNA] (ISOFORM 1)</scope>
    <source>
        <tissue>Placenta</tissue>
        <tissue>Retina</tissue>
    </source>
</reference>
<reference key="2">
    <citation type="journal article" date="2004" name="Nature">
        <title>The sequence and analysis of duplication-rich human chromosome 16.</title>
        <authorList>
            <person name="Martin J."/>
            <person name="Han C."/>
            <person name="Gordon L.A."/>
            <person name="Terry A."/>
            <person name="Prabhakar S."/>
            <person name="She X."/>
            <person name="Xie G."/>
            <person name="Hellsten U."/>
            <person name="Chan Y.M."/>
            <person name="Altherr M."/>
            <person name="Couronne O."/>
            <person name="Aerts A."/>
            <person name="Bajorek E."/>
            <person name="Black S."/>
            <person name="Blumer H."/>
            <person name="Branscomb E."/>
            <person name="Brown N.C."/>
            <person name="Bruno W.J."/>
            <person name="Buckingham J.M."/>
            <person name="Callen D.F."/>
            <person name="Campbell C.S."/>
            <person name="Campbell M.L."/>
            <person name="Campbell E.W."/>
            <person name="Caoile C."/>
            <person name="Challacombe J.F."/>
            <person name="Chasteen L.A."/>
            <person name="Chertkov O."/>
            <person name="Chi H.C."/>
            <person name="Christensen M."/>
            <person name="Clark L.M."/>
            <person name="Cohn J.D."/>
            <person name="Denys M."/>
            <person name="Detter J.C."/>
            <person name="Dickson M."/>
            <person name="Dimitrijevic-Bussod M."/>
            <person name="Escobar J."/>
            <person name="Fawcett J.J."/>
            <person name="Flowers D."/>
            <person name="Fotopulos D."/>
            <person name="Glavina T."/>
            <person name="Gomez M."/>
            <person name="Gonzales E."/>
            <person name="Goodstein D."/>
            <person name="Goodwin L.A."/>
            <person name="Grady D.L."/>
            <person name="Grigoriev I."/>
            <person name="Groza M."/>
            <person name="Hammon N."/>
            <person name="Hawkins T."/>
            <person name="Haydu L."/>
            <person name="Hildebrand C.E."/>
            <person name="Huang W."/>
            <person name="Israni S."/>
            <person name="Jett J."/>
            <person name="Jewett P.B."/>
            <person name="Kadner K."/>
            <person name="Kimball H."/>
            <person name="Kobayashi A."/>
            <person name="Krawczyk M.-C."/>
            <person name="Leyba T."/>
            <person name="Longmire J.L."/>
            <person name="Lopez F."/>
            <person name="Lou Y."/>
            <person name="Lowry S."/>
            <person name="Ludeman T."/>
            <person name="Manohar C.F."/>
            <person name="Mark G.A."/>
            <person name="McMurray K.L."/>
            <person name="Meincke L.J."/>
            <person name="Morgan J."/>
            <person name="Moyzis R.K."/>
            <person name="Mundt M.O."/>
            <person name="Munk A.C."/>
            <person name="Nandkeshwar R.D."/>
            <person name="Pitluck S."/>
            <person name="Pollard M."/>
            <person name="Predki P."/>
            <person name="Parson-Quintana B."/>
            <person name="Ramirez L."/>
            <person name="Rash S."/>
            <person name="Retterer J."/>
            <person name="Ricke D.O."/>
            <person name="Robinson D.L."/>
            <person name="Rodriguez A."/>
            <person name="Salamov A."/>
            <person name="Saunders E.H."/>
            <person name="Scott D."/>
            <person name="Shough T."/>
            <person name="Stallings R.L."/>
            <person name="Stalvey M."/>
            <person name="Sutherland R.D."/>
            <person name="Tapia R."/>
            <person name="Tesmer J.G."/>
            <person name="Thayer N."/>
            <person name="Thompson L.S."/>
            <person name="Tice H."/>
            <person name="Torney D.C."/>
            <person name="Tran-Gyamfi M."/>
            <person name="Tsai M."/>
            <person name="Ulanovsky L.E."/>
            <person name="Ustaszewska A."/>
            <person name="Vo N."/>
            <person name="White P.S."/>
            <person name="Williams A.L."/>
            <person name="Wills P.L."/>
            <person name="Wu J.-R."/>
            <person name="Wu K."/>
            <person name="Yang J."/>
            <person name="DeJong P."/>
            <person name="Bruce D."/>
            <person name="Doggett N.A."/>
            <person name="Deaven L."/>
            <person name="Schmutz J."/>
            <person name="Grimwood J."/>
            <person name="Richardson P."/>
            <person name="Rokhsar D.S."/>
            <person name="Eichler E.E."/>
            <person name="Gilna P."/>
            <person name="Lucas S.M."/>
            <person name="Myers R.M."/>
            <person name="Rubin E.M."/>
            <person name="Pennacchio L.A."/>
        </authorList>
    </citation>
    <scope>NUCLEOTIDE SEQUENCE [LARGE SCALE GENOMIC DNA]</scope>
</reference>
<reference key="3">
    <citation type="journal article" date="2004" name="Genome Res.">
        <title>The status, quality, and expansion of the NIH full-length cDNA project: the Mammalian Gene Collection (MGC).</title>
        <authorList>
            <consortium name="The MGC Project Team"/>
        </authorList>
    </citation>
    <scope>NUCLEOTIDE SEQUENCE [LARGE SCALE MRNA] (ISOFORMS 1 AND 2)</scope>
    <source>
        <tissue>Epidermal carcinoma</tissue>
        <tissue>Muscle</tissue>
        <tissue>Placenta</tissue>
    </source>
</reference>
<reference key="4">
    <citation type="journal article" date="2011" name="BMC Syst. Biol.">
        <title>Initial characterization of the human central proteome.</title>
        <authorList>
            <person name="Burkard T.R."/>
            <person name="Planyavsky M."/>
            <person name="Kaupe I."/>
            <person name="Breitwieser F.P."/>
            <person name="Buerckstuemmer T."/>
            <person name="Bennett K.L."/>
            <person name="Superti-Furga G."/>
            <person name="Colinge J."/>
        </authorList>
    </citation>
    <scope>IDENTIFICATION BY MASS SPECTROMETRY [LARGE SCALE ANALYSIS]</scope>
</reference>
<reference key="5">
    <citation type="journal article" date="2012" name="Nat. Cell Biol.">
        <title>Defining human ERAD networks through an integrative mapping strategy.</title>
        <authorList>
            <person name="Christianson J.C."/>
            <person name="Olzmann J.A."/>
            <person name="Shaler T.A."/>
            <person name="Sowa M.E."/>
            <person name="Bennett E.J."/>
            <person name="Richter C.M."/>
            <person name="Tyler R.E."/>
            <person name="Greenblatt E.J."/>
            <person name="Harper J.W."/>
            <person name="Kopito R.R."/>
        </authorList>
    </citation>
    <scope>IDENTIFICATION IN THE EMC COMPLEX</scope>
    <scope>SUBCELLULAR LOCATION</scope>
</reference>
<reference key="6">
    <citation type="journal article" date="2015" name="Proteomics">
        <title>N-terminome analysis of the human mitochondrial proteome.</title>
        <authorList>
            <person name="Vaca Jacome A.S."/>
            <person name="Rabilloud T."/>
            <person name="Schaeffer-Reiss C."/>
            <person name="Rompais M."/>
            <person name="Ayoub D."/>
            <person name="Lane L."/>
            <person name="Bairoch A."/>
            <person name="Van Dorsselaer A."/>
            <person name="Carapito C."/>
        </authorList>
    </citation>
    <scope>IDENTIFICATION BY MASS SPECTROMETRY [LARGE SCALE ANALYSIS]</scope>
</reference>
<reference key="7">
    <citation type="journal article" date="2018" name="Cell">
        <title>EMC Is Required to Initiate Accurate Membrane Protein Topogenesis.</title>
        <authorList>
            <person name="Chitwood P.J."/>
            <person name="Juszkiewicz S."/>
            <person name="Guna A."/>
            <person name="Shao S."/>
            <person name="Hegde R.S."/>
        </authorList>
    </citation>
    <scope>FUNCTION</scope>
</reference>
<reference key="8">
    <citation type="journal article" date="2018" name="Elife">
        <title>The ER membrane protein complex interacts cotranslationally to enable biogenesis of multipass membrane proteins.</title>
        <authorList>
            <person name="Shurtleff M.J."/>
            <person name="Itzhak D.N."/>
            <person name="Hussmann J.A."/>
            <person name="Schirle Oakdale N.T."/>
            <person name="Costa E.A."/>
            <person name="Jonikas M."/>
            <person name="Weibezahn J."/>
            <person name="Popova K.D."/>
            <person name="Jan C.H."/>
            <person name="Sinitcyn P."/>
            <person name="Vembar S.S."/>
            <person name="Hernandez H."/>
            <person name="Cox J."/>
            <person name="Burlingame A.L."/>
            <person name="Brodsky J.L."/>
            <person name="Frost A."/>
            <person name="Borner G.H."/>
            <person name="Weissman J.S."/>
        </authorList>
    </citation>
    <scope>FUNCTION</scope>
</reference>
<reference key="9">
    <citation type="journal article" date="2018" name="Science">
        <title>The ER membrane protein complex is a transmembrane domain insertase.</title>
        <authorList>
            <person name="Guna A."/>
            <person name="Volkmar N."/>
            <person name="Christianson J.C."/>
            <person name="Hegde R.S."/>
        </authorList>
    </citation>
    <scope>FUNCTION</scope>
    <scope>SUBUNIT</scope>
</reference>
<reference key="10">
    <citation type="journal article" date="2020" name="Elife">
        <title>The architecture of EMC reveals a path for membrane protein insertion.</title>
        <authorList>
            <person name="O'Donnell J.P."/>
            <person name="Phillips B.P."/>
            <person name="Yagita Y."/>
            <person name="Juszkiewicz S."/>
            <person name="Wagner A."/>
            <person name="Malinverni D."/>
            <person name="Keenan R.J."/>
            <person name="Miller E.A."/>
            <person name="Hegde R.S."/>
        </authorList>
    </citation>
    <scope>FUNCTION</scope>
    <scope>SUBUNIT</scope>
</reference>
<reference evidence="11" key="11">
    <citation type="journal article" date="2020" name="Science">
        <title>Structural basis for membrane insertion by the human ER membrane protein complex.</title>
        <authorList>
            <person name="Pleiner T."/>
            <person name="Tomaleri G.P."/>
            <person name="Januszyk K."/>
            <person name="Inglis A.J."/>
            <person name="Hazu M."/>
            <person name="Voorhees R.M."/>
        </authorList>
    </citation>
    <scope>STRUCTURE BY ELECTRON MICROSCOPY (3.40 ANGSTROMS) OF THE EMC COMPLEX</scope>
    <scope>FUNCTION</scope>
    <scope>TOPOLOGY</scope>
</reference>
<organism>
    <name type="scientific">Homo sapiens</name>
    <name type="common">Human</name>
    <dbReference type="NCBI Taxonomy" id="9606"/>
    <lineage>
        <taxon>Eukaryota</taxon>
        <taxon>Metazoa</taxon>
        <taxon>Chordata</taxon>
        <taxon>Craniata</taxon>
        <taxon>Vertebrata</taxon>
        <taxon>Euteleostomi</taxon>
        <taxon>Mammalia</taxon>
        <taxon>Eutheria</taxon>
        <taxon>Euarchontoglires</taxon>
        <taxon>Primates</taxon>
        <taxon>Haplorrhini</taxon>
        <taxon>Catarrhini</taxon>
        <taxon>Hominidae</taxon>
        <taxon>Homo</taxon>
    </lineage>
</organism>
<feature type="chain" id="PRO_0000221187" description="ER membrane protein complex subunit 8">
    <location>
        <begin position="1"/>
        <end position="210"/>
    </location>
</feature>
<feature type="domain" description="MPN" evidence="1">
    <location>
        <begin position="4"/>
        <end position="150"/>
    </location>
</feature>
<feature type="splice variant" id="VSP_045089" description="In isoform 2." evidence="8">
    <location>
        <begin position="127"/>
        <end position="210"/>
    </location>
</feature>
<feature type="strand" evidence="14">
    <location>
        <begin position="3"/>
        <end position="6"/>
    </location>
</feature>
<feature type="helix" evidence="14">
    <location>
        <begin position="8"/>
        <end position="20"/>
    </location>
</feature>
<feature type="strand" evidence="14">
    <location>
        <begin position="22"/>
        <end position="32"/>
    </location>
</feature>
<feature type="strand" evidence="14">
    <location>
        <begin position="51"/>
        <end position="64"/>
    </location>
</feature>
<feature type="helix" evidence="14">
    <location>
        <begin position="68"/>
        <end position="82"/>
    </location>
</feature>
<feature type="turn" evidence="14">
    <location>
        <begin position="83"/>
        <end position="86"/>
    </location>
</feature>
<feature type="strand" evidence="14">
    <location>
        <begin position="88"/>
        <end position="95"/>
    </location>
</feature>
<feature type="strand" evidence="13">
    <location>
        <begin position="97"/>
        <end position="100"/>
    </location>
</feature>
<feature type="helix" evidence="14">
    <location>
        <begin position="106"/>
        <end position="118"/>
    </location>
</feature>
<feature type="strand" evidence="12">
    <location>
        <begin position="119"/>
        <end position="121"/>
    </location>
</feature>
<feature type="strand" evidence="14">
    <location>
        <begin position="123"/>
        <end position="127"/>
    </location>
</feature>
<feature type="strand" evidence="14">
    <location>
        <begin position="133"/>
        <end position="135"/>
    </location>
</feature>
<feature type="strand" evidence="14">
    <location>
        <begin position="141"/>
        <end position="146"/>
    </location>
</feature>
<feature type="strand" evidence="14">
    <location>
        <begin position="148"/>
        <end position="150"/>
    </location>
</feature>
<feature type="strand" evidence="14">
    <location>
        <begin position="152"/>
        <end position="154"/>
    </location>
</feature>
<feature type="turn" evidence="12">
    <location>
        <begin position="155"/>
        <end position="157"/>
    </location>
</feature>
<feature type="helix" evidence="14">
    <location>
        <begin position="164"/>
        <end position="176"/>
    </location>
</feature>
<feature type="helix" evidence="13">
    <location>
        <begin position="180"/>
        <end position="182"/>
    </location>
</feature>
<feature type="helix" evidence="14">
    <location>
        <begin position="186"/>
        <end position="191"/>
    </location>
</feature>
<feature type="strand" evidence="14">
    <location>
        <begin position="193"/>
        <end position="195"/>
    </location>
</feature>
<feature type="helix" evidence="14">
    <location>
        <begin position="200"/>
        <end position="209"/>
    </location>
</feature>
<dbReference type="EMBL" id="AF005888">
    <property type="protein sequence ID" value="AAB94489.1"/>
    <property type="molecule type" value="mRNA"/>
</dbReference>
<dbReference type="EMBL" id="AF005889">
    <property type="protein sequence ID" value="AAB94820.1"/>
    <property type="molecule type" value="Genomic_DNA"/>
</dbReference>
<dbReference type="EMBL" id="AC018695">
    <property type="status" value="NOT_ANNOTATED_CDS"/>
    <property type="molecule type" value="Genomic_DNA"/>
</dbReference>
<dbReference type="EMBL" id="BC005886">
    <property type="protein sequence ID" value="AAH05886.1"/>
    <property type="molecule type" value="mRNA"/>
</dbReference>
<dbReference type="EMBL" id="BC001472">
    <property type="protein sequence ID" value="AAH01472.1"/>
    <property type="molecule type" value="mRNA"/>
</dbReference>
<dbReference type="EMBL" id="BC007445">
    <property type="protein sequence ID" value="AAH07445.1"/>
    <property type="molecule type" value="mRNA"/>
</dbReference>
<dbReference type="EMBL" id="BC020250">
    <property type="protein sequence ID" value="AAH20250.1"/>
    <property type="molecule type" value="mRNA"/>
</dbReference>
<dbReference type="EMBL" id="BQ674834">
    <property type="status" value="NOT_ANNOTATED_CDS"/>
    <property type="molecule type" value="mRNA"/>
</dbReference>
<dbReference type="CCDS" id="CCDS10954.1">
    <molecule id="O43402-1"/>
</dbReference>
<dbReference type="CCDS" id="CCDS45541.1">
    <molecule id="O43402-2"/>
</dbReference>
<dbReference type="RefSeq" id="NP_001135760.1">
    <molecule id="O43402-2"/>
    <property type="nucleotide sequence ID" value="NM_001142288.2"/>
</dbReference>
<dbReference type="RefSeq" id="NP_006058.1">
    <molecule id="O43402-1"/>
    <property type="nucleotide sequence ID" value="NM_006067.5"/>
</dbReference>
<dbReference type="PDB" id="6WW7">
    <property type="method" value="EM"/>
    <property type="resolution" value="3.40 A"/>
    <property type="chains" value="H=1-210"/>
</dbReference>
<dbReference type="PDB" id="7ADO">
    <property type="method" value="EM"/>
    <property type="resolution" value="3.39 A"/>
    <property type="chains" value="H=1-210"/>
</dbReference>
<dbReference type="PDB" id="7ADP">
    <property type="method" value="EM"/>
    <property type="resolution" value="3.60 A"/>
    <property type="chains" value="H=1-210"/>
</dbReference>
<dbReference type="PDB" id="8EOI">
    <property type="method" value="EM"/>
    <property type="resolution" value="3.40 A"/>
    <property type="chains" value="H=3-210"/>
</dbReference>
<dbReference type="PDB" id="8J0N">
    <property type="method" value="EM"/>
    <property type="resolution" value="3.47 A"/>
    <property type="chains" value="H=1-210"/>
</dbReference>
<dbReference type="PDB" id="8J0O">
    <property type="method" value="EM"/>
    <property type="resolution" value="3.32 A"/>
    <property type="chains" value="H=1-210"/>
</dbReference>
<dbReference type="PDB" id="8S9S">
    <property type="method" value="EM"/>
    <property type="resolution" value="3.60 A"/>
    <property type="chains" value="8=1-210"/>
</dbReference>
<dbReference type="PDB" id="9C7V">
    <property type="method" value="EM"/>
    <property type="resolution" value="6.60 A"/>
    <property type="chains" value="8=1-210"/>
</dbReference>
<dbReference type="PDBsum" id="6WW7"/>
<dbReference type="PDBsum" id="7ADO"/>
<dbReference type="PDBsum" id="7ADP"/>
<dbReference type="PDBsum" id="8EOI"/>
<dbReference type="PDBsum" id="8J0N"/>
<dbReference type="PDBsum" id="8J0O"/>
<dbReference type="PDBsum" id="8S9S"/>
<dbReference type="PDBsum" id="9C7V"/>
<dbReference type="EMDB" id="EMD-11732"/>
<dbReference type="EMDB" id="EMD-11733"/>
<dbReference type="EMDB" id="EMD-21929"/>
<dbReference type="EMDB" id="EMD-28376"/>
<dbReference type="EMDB" id="EMD-35906"/>
<dbReference type="EMDB" id="EMD-35907"/>
<dbReference type="EMDB" id="EMD-40245"/>
<dbReference type="EMDB" id="EMD-40246"/>
<dbReference type="EMDB" id="EMD-45295"/>
<dbReference type="SMR" id="O43402"/>
<dbReference type="BioGRID" id="115611">
    <property type="interactions" value="220"/>
</dbReference>
<dbReference type="ComplexPortal" id="CPX-5848">
    <property type="entry name" value="Endoplasmic reticulum membrane complex, EMC8 variant"/>
</dbReference>
<dbReference type="CORUM" id="O43402"/>
<dbReference type="FunCoup" id="O43402">
    <property type="interactions" value="4253"/>
</dbReference>
<dbReference type="IntAct" id="O43402">
    <property type="interactions" value="112"/>
</dbReference>
<dbReference type="MINT" id="O43402"/>
<dbReference type="STRING" id="9606.ENSP00000253457"/>
<dbReference type="TCDB" id="3.A.27.1.1">
    <property type="family name" value="the endoplasmic reticulum membrane protein insertion complex (emc) family"/>
</dbReference>
<dbReference type="GlyCosmos" id="O43402">
    <property type="glycosylation" value="2 sites, 1 glycan"/>
</dbReference>
<dbReference type="GlyGen" id="O43402">
    <property type="glycosylation" value="2 sites, 1 O-linked glycan (2 sites)"/>
</dbReference>
<dbReference type="iPTMnet" id="O43402"/>
<dbReference type="PhosphoSitePlus" id="O43402"/>
<dbReference type="SwissPalm" id="O43402"/>
<dbReference type="BioMuta" id="EMC8"/>
<dbReference type="jPOST" id="O43402"/>
<dbReference type="MassIVE" id="O43402"/>
<dbReference type="PaxDb" id="9606-ENSP00000253457"/>
<dbReference type="PeptideAtlas" id="O43402"/>
<dbReference type="ProteomicsDB" id="48928">
    <molecule id="O43402-1"/>
</dbReference>
<dbReference type="Pumba" id="O43402"/>
<dbReference type="Antibodypedia" id="30647">
    <property type="antibodies" value="276 antibodies from 22 providers"/>
</dbReference>
<dbReference type="DNASU" id="10328"/>
<dbReference type="Ensembl" id="ENST00000253457.8">
    <molecule id="O43402-1"/>
    <property type="protein sequence ID" value="ENSP00000253457.3"/>
    <property type="gene ID" value="ENSG00000131148.9"/>
</dbReference>
<dbReference type="Ensembl" id="ENST00000435200.2">
    <molecule id="O43402-2"/>
    <property type="protein sequence ID" value="ENSP00000391730.1"/>
    <property type="gene ID" value="ENSG00000131148.9"/>
</dbReference>
<dbReference type="GeneID" id="10328"/>
<dbReference type="KEGG" id="hsa:10328"/>
<dbReference type="MANE-Select" id="ENST00000253457.8">
    <property type="protein sequence ID" value="ENSP00000253457.3"/>
    <property type="RefSeq nucleotide sequence ID" value="NM_006067.5"/>
    <property type="RefSeq protein sequence ID" value="NP_006058.1"/>
</dbReference>
<dbReference type="UCSC" id="uc010vol.3">
    <molecule id="O43402-1"/>
    <property type="organism name" value="human"/>
</dbReference>
<dbReference type="AGR" id="HGNC:7864"/>
<dbReference type="CTD" id="10328"/>
<dbReference type="DisGeNET" id="10328"/>
<dbReference type="GeneCards" id="EMC8"/>
<dbReference type="HGNC" id="HGNC:7864">
    <property type="gene designation" value="EMC8"/>
</dbReference>
<dbReference type="HPA" id="ENSG00000131148">
    <property type="expression patterns" value="Low tissue specificity"/>
</dbReference>
<dbReference type="MIM" id="604886">
    <property type="type" value="gene"/>
</dbReference>
<dbReference type="neXtProt" id="NX_O43402"/>
<dbReference type="OpenTargets" id="ENSG00000131148"/>
<dbReference type="PharmGKB" id="PA31668"/>
<dbReference type="VEuPathDB" id="HostDB:ENSG00000131148"/>
<dbReference type="eggNOG" id="KOG3289">
    <property type="taxonomic scope" value="Eukaryota"/>
</dbReference>
<dbReference type="GeneTree" id="ENSGT00390000006738"/>
<dbReference type="HOGENOM" id="CLU_087337_0_1_1"/>
<dbReference type="InParanoid" id="O43402"/>
<dbReference type="OMA" id="PHCAING"/>
<dbReference type="OrthoDB" id="194468at2759"/>
<dbReference type="PAN-GO" id="O43402">
    <property type="GO annotations" value="1 GO annotation based on evolutionary models"/>
</dbReference>
<dbReference type="PhylomeDB" id="O43402"/>
<dbReference type="TreeFam" id="TF313860"/>
<dbReference type="PathwayCommons" id="O43402"/>
<dbReference type="SignaLink" id="O43402"/>
<dbReference type="BioGRID-ORCS" id="10328">
    <property type="hits" value="22 hits in 1170 CRISPR screens"/>
</dbReference>
<dbReference type="ChiTaRS" id="EMC8">
    <property type="organism name" value="human"/>
</dbReference>
<dbReference type="GenomeRNAi" id="10328"/>
<dbReference type="Pharos" id="O43402">
    <property type="development level" value="Tbio"/>
</dbReference>
<dbReference type="PRO" id="PR:O43402"/>
<dbReference type="Proteomes" id="UP000005640">
    <property type="component" value="Chromosome 16"/>
</dbReference>
<dbReference type="RNAct" id="O43402">
    <property type="molecule type" value="protein"/>
</dbReference>
<dbReference type="Bgee" id="ENSG00000131148">
    <property type="expression patterns" value="Expressed in oocyte and 196 other cell types or tissues"/>
</dbReference>
<dbReference type="ExpressionAtlas" id="O43402">
    <property type="expression patterns" value="baseline and differential"/>
</dbReference>
<dbReference type="GO" id="GO:0005737">
    <property type="term" value="C:cytoplasm"/>
    <property type="evidence" value="ECO:0000314"/>
    <property type="project" value="UniProtKB"/>
</dbReference>
<dbReference type="GO" id="GO:0072546">
    <property type="term" value="C:EMC complex"/>
    <property type="evidence" value="ECO:0000314"/>
    <property type="project" value="UniProtKB"/>
</dbReference>
<dbReference type="GO" id="GO:0005783">
    <property type="term" value="C:endoplasmic reticulum"/>
    <property type="evidence" value="ECO:0000314"/>
    <property type="project" value="HPA"/>
</dbReference>
<dbReference type="GO" id="GO:0005789">
    <property type="term" value="C:endoplasmic reticulum membrane"/>
    <property type="evidence" value="ECO:0000303"/>
    <property type="project" value="ComplexPortal"/>
</dbReference>
<dbReference type="GO" id="GO:0005794">
    <property type="term" value="C:Golgi apparatus"/>
    <property type="evidence" value="ECO:0000314"/>
    <property type="project" value="HPA"/>
</dbReference>
<dbReference type="GO" id="GO:0016020">
    <property type="term" value="C:membrane"/>
    <property type="evidence" value="ECO:0007005"/>
    <property type="project" value="UniProtKB"/>
</dbReference>
<dbReference type="GO" id="GO:0045050">
    <property type="term" value="P:protein insertion into ER membrane by stop-transfer membrane-anchor sequence"/>
    <property type="evidence" value="ECO:0000314"/>
    <property type="project" value="ComplexPortal"/>
</dbReference>
<dbReference type="GO" id="GO:0071816">
    <property type="term" value="P:tail-anchored membrane protein insertion into ER membrane"/>
    <property type="evidence" value="ECO:0000314"/>
    <property type="project" value="UniProtKB"/>
</dbReference>
<dbReference type="CDD" id="cd08060">
    <property type="entry name" value="MPN_UPF0172"/>
    <property type="match status" value="1"/>
</dbReference>
<dbReference type="InterPro" id="IPR005366">
    <property type="entry name" value="EMC8/9"/>
</dbReference>
<dbReference type="InterPro" id="IPR037518">
    <property type="entry name" value="MPN"/>
</dbReference>
<dbReference type="PANTHER" id="PTHR12941">
    <property type="entry name" value="ER MEMBRANE PROTEIN COMPLEX"/>
    <property type="match status" value="1"/>
</dbReference>
<dbReference type="PANTHER" id="PTHR12941:SF13">
    <property type="entry name" value="ER MEMBRANE PROTEIN COMPLEX SUBUNIT 8"/>
    <property type="match status" value="1"/>
</dbReference>
<dbReference type="Pfam" id="PF03665">
    <property type="entry name" value="UPF0172"/>
    <property type="match status" value="1"/>
</dbReference>
<dbReference type="PROSITE" id="PS50249">
    <property type="entry name" value="MPN"/>
    <property type="match status" value="1"/>
</dbReference>
<comment type="function">
    <text evidence="3 4 5 6 7 9">Part of the endoplasmic reticulum membrane protein complex (EMC) that enables the energy-independent insertion into endoplasmic reticulum membranes of newly synthesized membrane proteins (PubMed:29242231, PubMed:29809151, PubMed:30415835, PubMed:32439656, PubMed:32459176). Preferentially accommodates proteins with transmembrane domains that are weakly hydrophobic or contain destabilizing features such as charged and aromatic residues (PubMed:29242231, PubMed:29809151, PubMed:30415835). Involved in the cotranslational insertion of multi-pass membrane proteins in which stop-transfer membrane-anchor sequences become ER membrane spanning helices (PubMed:29809151, PubMed:30415835). It is also required for the post-translational insertion of tail-anchored/TA proteins in endoplasmic reticulum membranes (PubMed:29242231, PubMed:29809151). By mediating the proper cotranslational insertion of N-terminal transmembrane domains in an N-exo topology, with translocated N-terminus in the lumen of the ER, controls the topology of multi-pass membrane proteins like the G protein-coupled receptors (PubMed:30415835). By regulating the insertion of various proteins in membranes, it is indirectly involved in many cellular processes (Probable).</text>
</comment>
<comment type="subunit">
    <text evidence="2 3 6 7">Component of the ER membrane protein complex (EMC) (PubMed:22119785, PubMed:29242231). EMC8 and EMC9 are mutually exclusive subunits of the EMC complex (PubMed:32439656, PubMed:32459176).</text>
</comment>
<comment type="interaction">
    <interactant intactId="EBI-741841">
        <id>O43402</id>
    </interactant>
    <interactant intactId="EBI-359031">
        <id>Q15006</id>
        <label>EMC2</label>
    </interactant>
    <organismsDiffer>false</organismsDiffer>
    <experiments>17</experiments>
</comment>
<comment type="subcellular location">
    <subcellularLocation>
        <location evidence="2">Endoplasmic reticulum membrane</location>
        <topology evidence="10">Peripheral membrane protein</topology>
        <orientation evidence="6">Cytoplasmic side</orientation>
    </subcellularLocation>
</comment>
<comment type="alternative products">
    <event type="alternative splicing"/>
    <isoform>
        <id>O43402-1</id>
        <name>1</name>
        <sequence type="displayed"/>
    </isoform>
    <isoform>
        <id>O43402-2</id>
        <name>2</name>
        <sequence type="described" ref="VSP_045089"/>
    </isoform>
</comment>
<comment type="tissue specificity">
    <text>Expressed in liver, pancreas, heart, lung, kidney, brain, skeletal muscle, and placenta. Expression levels are highest in pancreas and moderate in heart, skeletal muscle, and placenta.</text>
</comment>
<comment type="similarity">
    <text evidence="9">Belongs to the EMC8/EMC9 family.</text>
</comment>
<name>EMC8_HUMAN</name>
<evidence type="ECO:0000255" key="1">
    <source>
        <dbReference type="PROSITE-ProRule" id="PRU01182"/>
    </source>
</evidence>
<evidence type="ECO:0000269" key="2">
    <source>
    </source>
</evidence>
<evidence type="ECO:0000269" key="3">
    <source>
    </source>
</evidence>
<evidence type="ECO:0000269" key="4">
    <source>
    </source>
</evidence>
<evidence type="ECO:0000269" key="5">
    <source>
    </source>
</evidence>
<evidence type="ECO:0000269" key="6">
    <source>
    </source>
</evidence>
<evidence type="ECO:0000269" key="7">
    <source>
    </source>
</evidence>
<evidence type="ECO:0000303" key="8">
    <source>
    </source>
</evidence>
<evidence type="ECO:0000305" key="9"/>
<evidence type="ECO:0000305" key="10">
    <source>
    </source>
</evidence>
<evidence type="ECO:0007744" key="11">
    <source>
        <dbReference type="PDB" id="6WW7"/>
    </source>
</evidence>
<evidence type="ECO:0007829" key="12">
    <source>
        <dbReference type="PDB" id="6WW7"/>
    </source>
</evidence>
<evidence type="ECO:0007829" key="13">
    <source>
        <dbReference type="PDB" id="7ADO"/>
    </source>
</evidence>
<evidence type="ECO:0007829" key="14">
    <source>
        <dbReference type="PDB" id="8J0O"/>
    </source>
</evidence>
<protein>
    <recommendedName>
        <fullName>ER membrane protein complex subunit 8</fullName>
    </recommendedName>
    <alternativeName>
        <fullName>Neighbor of COX4</fullName>
    </alternativeName>
    <alternativeName>
        <fullName>Protein FAM158B</fullName>
    </alternativeName>
</protein>
<sequence>MPGVKLTTQAYCKMVLHGAKYPHCAVNGLLVAEKQKPRKEHLPLGGPGAHHTLFVDCIPLFHGTLALAPMLEVALTLIDSWCKDHSYVIAGYYQANERVKDASPNQVAEKVASRIAEGFSDTALIMVDNTKFTMDCVAPTIHVYEHHENRWRCRDPHHDYCEDWPEAQRISASLLDSRSYETLVDFDNHLDDIRNDWTNPEINKAVLHLC</sequence>
<proteinExistence type="evidence at protein level"/>
<gene>
    <name type="primary">EMC8</name>
    <name type="synonym">C16orf2</name>
    <name type="synonym">C16orf4</name>
    <name type="synonym">COX4AL</name>
    <name type="synonym">COX4NB</name>
    <name type="synonym">FAM158B</name>
    <name type="synonym">NOC4</name>
</gene>